<reference evidence="6 7" key="1">
    <citation type="journal article" date="2007" name="J. Biol. Chem.">
        <title>Identification and characterization of a Schizosaccharomyces pombe RNA polymerase II elongation factor with similarity to the metazoan transcription factor ELL.</title>
        <authorList>
            <person name="Banks C.A."/>
            <person name="Kong S.E."/>
            <person name="Spahr H."/>
            <person name="Florens L."/>
            <person name="Martin-Brown S."/>
            <person name="Washburn M.P."/>
            <person name="Conaway J.W."/>
            <person name="Mushegian A."/>
            <person name="Conaway R.C."/>
        </authorList>
    </citation>
    <scope>NUCLEOTIDE SEQUENCE [MRNA]</scope>
    <scope>IDENTIFICATION BY MASS SPECTROMETRY</scope>
    <scope>FUNCTION IN TRANSCRIPTION</scope>
    <scope>INTERACTION WITH ELL1</scope>
    <scope>SUBUNIT</scope>
</reference>
<reference evidence="8" key="2">
    <citation type="journal article" date="2002" name="Nature">
        <title>The genome sequence of Schizosaccharomyces pombe.</title>
        <authorList>
            <person name="Wood V."/>
            <person name="Gwilliam R."/>
            <person name="Rajandream M.A."/>
            <person name="Lyne M.H."/>
            <person name="Lyne R."/>
            <person name="Stewart A."/>
            <person name="Sgouros J.G."/>
            <person name="Peat N."/>
            <person name="Hayles J."/>
            <person name="Baker S.G."/>
            <person name="Basham D."/>
            <person name="Bowman S."/>
            <person name="Brooks K."/>
            <person name="Brown D."/>
            <person name="Brown S."/>
            <person name="Chillingworth T."/>
            <person name="Churcher C.M."/>
            <person name="Collins M."/>
            <person name="Connor R."/>
            <person name="Cronin A."/>
            <person name="Davis P."/>
            <person name="Feltwell T."/>
            <person name="Fraser A."/>
            <person name="Gentles S."/>
            <person name="Goble A."/>
            <person name="Hamlin N."/>
            <person name="Harris D.E."/>
            <person name="Hidalgo J."/>
            <person name="Hodgson G."/>
            <person name="Holroyd S."/>
            <person name="Hornsby T."/>
            <person name="Howarth S."/>
            <person name="Huckle E.J."/>
            <person name="Hunt S."/>
            <person name="Jagels K."/>
            <person name="James K.D."/>
            <person name="Jones L."/>
            <person name="Jones M."/>
            <person name="Leather S."/>
            <person name="McDonald S."/>
            <person name="McLean J."/>
            <person name="Mooney P."/>
            <person name="Moule S."/>
            <person name="Mungall K.L."/>
            <person name="Murphy L.D."/>
            <person name="Niblett D."/>
            <person name="Odell C."/>
            <person name="Oliver K."/>
            <person name="O'Neil S."/>
            <person name="Pearson D."/>
            <person name="Quail M.A."/>
            <person name="Rabbinowitsch E."/>
            <person name="Rutherford K.M."/>
            <person name="Rutter S."/>
            <person name="Saunders D."/>
            <person name="Seeger K."/>
            <person name="Sharp S."/>
            <person name="Skelton J."/>
            <person name="Simmonds M.N."/>
            <person name="Squares R."/>
            <person name="Squares S."/>
            <person name="Stevens K."/>
            <person name="Taylor K."/>
            <person name="Taylor R.G."/>
            <person name="Tivey A."/>
            <person name="Walsh S.V."/>
            <person name="Warren T."/>
            <person name="Whitehead S."/>
            <person name="Woodward J.R."/>
            <person name="Volckaert G."/>
            <person name="Aert R."/>
            <person name="Robben J."/>
            <person name="Grymonprez B."/>
            <person name="Weltjens I."/>
            <person name="Vanstreels E."/>
            <person name="Rieger M."/>
            <person name="Schaefer M."/>
            <person name="Mueller-Auer S."/>
            <person name="Gabel C."/>
            <person name="Fuchs M."/>
            <person name="Duesterhoeft A."/>
            <person name="Fritzc C."/>
            <person name="Holzer E."/>
            <person name="Moestl D."/>
            <person name="Hilbert H."/>
            <person name="Borzym K."/>
            <person name="Langer I."/>
            <person name="Beck A."/>
            <person name="Lehrach H."/>
            <person name="Reinhardt R."/>
            <person name="Pohl T.M."/>
            <person name="Eger P."/>
            <person name="Zimmermann W."/>
            <person name="Wedler H."/>
            <person name="Wambutt R."/>
            <person name="Purnelle B."/>
            <person name="Goffeau A."/>
            <person name="Cadieu E."/>
            <person name="Dreano S."/>
            <person name="Gloux S."/>
            <person name="Lelaure V."/>
            <person name="Mottier S."/>
            <person name="Galibert F."/>
            <person name="Aves S.J."/>
            <person name="Xiang Z."/>
            <person name="Hunt C."/>
            <person name="Moore K."/>
            <person name="Hurst S.M."/>
            <person name="Lucas M."/>
            <person name="Rochet M."/>
            <person name="Gaillardin C."/>
            <person name="Tallada V.A."/>
            <person name="Garzon A."/>
            <person name="Thode G."/>
            <person name="Daga R.R."/>
            <person name="Cruzado L."/>
            <person name="Jimenez J."/>
            <person name="Sanchez M."/>
            <person name="del Rey F."/>
            <person name="Benito J."/>
            <person name="Dominguez A."/>
            <person name="Revuelta J.L."/>
            <person name="Moreno S."/>
            <person name="Armstrong J."/>
            <person name="Forsburg S.L."/>
            <person name="Cerutti L."/>
            <person name="Lowe T."/>
            <person name="McCombie W.R."/>
            <person name="Paulsen I."/>
            <person name="Potashkin J."/>
            <person name="Shpakovski G.V."/>
            <person name="Ussery D."/>
            <person name="Barrell B.G."/>
            <person name="Nurse P."/>
        </authorList>
    </citation>
    <scope>NUCLEOTIDE SEQUENCE [LARGE SCALE GENOMIC DNA]</scope>
    <source>
        <strain>972 / ATCC 24843</strain>
    </source>
</reference>
<reference key="3">
    <citation type="journal article" date="2008" name="J. Proteome Res.">
        <title>Phosphoproteome analysis of fission yeast.</title>
        <authorList>
            <person name="Wilson-Grady J.T."/>
            <person name="Villen J."/>
            <person name="Gygi S.P."/>
        </authorList>
    </citation>
    <scope>PHOSPHORYLATION [LARGE SCALE ANALYSIS] AT SER-247</scope>
    <scope>IDENTIFICATION BY MASS SPECTROMETRY</scope>
</reference>
<accession>A0ZWU1</accession>
<organism>
    <name type="scientific">Schizosaccharomyces pombe (strain 972 / ATCC 24843)</name>
    <name type="common">Fission yeast</name>
    <dbReference type="NCBI Taxonomy" id="284812"/>
    <lineage>
        <taxon>Eukaryota</taxon>
        <taxon>Fungi</taxon>
        <taxon>Dikarya</taxon>
        <taxon>Ascomycota</taxon>
        <taxon>Taphrinomycotina</taxon>
        <taxon>Schizosaccharomycetes</taxon>
        <taxon>Schizosaccharomycetales</taxon>
        <taxon>Schizosaccharomycetaceae</taxon>
        <taxon>Schizosaccharomyces</taxon>
    </lineage>
</organism>
<protein>
    <recommendedName>
        <fullName>Ell1-associated factor 1</fullName>
    </recommendedName>
</protein>
<feature type="chain" id="PRO_0000307925" description="Ell1-associated factor 1">
    <location>
        <begin position="1"/>
        <end position="251"/>
    </location>
</feature>
<feature type="region of interest" description="Disordered" evidence="3">
    <location>
        <begin position="110"/>
        <end position="187"/>
    </location>
</feature>
<feature type="region of interest" description="Disordered" evidence="3">
    <location>
        <begin position="201"/>
        <end position="251"/>
    </location>
</feature>
<feature type="compositionally biased region" description="Polar residues" evidence="3">
    <location>
        <begin position="112"/>
        <end position="123"/>
    </location>
</feature>
<feature type="compositionally biased region" description="Low complexity" evidence="3">
    <location>
        <begin position="124"/>
        <end position="135"/>
    </location>
</feature>
<feature type="compositionally biased region" description="Basic and acidic residues" evidence="3">
    <location>
        <begin position="143"/>
        <end position="157"/>
    </location>
</feature>
<feature type="compositionally biased region" description="Polar residues" evidence="3">
    <location>
        <begin position="204"/>
        <end position="220"/>
    </location>
</feature>
<feature type="compositionally biased region" description="Polar residues" evidence="3">
    <location>
        <begin position="236"/>
        <end position="251"/>
    </location>
</feature>
<feature type="modified residue" description="Phosphoserine" evidence="5">
    <location>
        <position position="247"/>
    </location>
</feature>
<gene>
    <name type="primary">eaf1</name>
    <name type="ORF">SPCC1223.10c</name>
</gene>
<comment type="function">
    <text evidence="4">Activates transcription elongation by RNA polymerase II and pyrophosphorolysis as a complex with ell1. Acts as a transcriptional transactivator of ell1 elongation activities.</text>
</comment>
<comment type="subunit">
    <text evidence="4">Forms a stable heterodimer with ell1. Ell1-eaf1 complex interacts with RNA polymerase II.</text>
</comment>
<comment type="subcellular location">
    <subcellularLocation>
        <location evidence="1">Nucleus</location>
    </subcellularLocation>
</comment>
<comment type="similarity">
    <text evidence="2">Belongs to the EAF family.</text>
</comment>
<sequence>MNSLQKGSYKVIPGSSFSKNSNGLLSIKYNFIPESVDPSRRGVLEKAQEAYRLRLPSTFDDDRPHIFEGSCQRARNVDCVLIFNAKTKTFTLEHIDEIARLNALRNPKVSKTVPSNAITQSDNSQISESKSTSQSAVTTNSTRRKEKELEASKDGKIKPSSSNTRYPAISSKGPITTDTNDEPDMEVMELDDFAKELELGFDQEFNSIDDPSTVSQTASKPISLRGLSSQERDYASSAQAEGISSASEDED</sequence>
<keyword id="KW-0010">Activator</keyword>
<keyword id="KW-0539">Nucleus</keyword>
<keyword id="KW-0597">Phosphoprotein</keyword>
<keyword id="KW-1185">Reference proteome</keyword>
<keyword id="KW-0804">Transcription</keyword>
<keyword id="KW-0805">Transcription regulation</keyword>
<dbReference type="EMBL" id="EF192607">
    <property type="protein sequence ID" value="ABM68355.1"/>
    <property type="molecule type" value="mRNA"/>
</dbReference>
<dbReference type="EMBL" id="CU329672">
    <property type="protein sequence ID" value="CAL92194.1"/>
    <property type="molecule type" value="Genomic_DNA"/>
</dbReference>
<dbReference type="RefSeq" id="XP_001713171.1">
    <property type="nucleotide sequence ID" value="XM_001713119.2"/>
</dbReference>
<dbReference type="SMR" id="A0ZWU1"/>
<dbReference type="BioGRID" id="275676">
    <property type="interactions" value="26"/>
</dbReference>
<dbReference type="FunCoup" id="A0ZWU1">
    <property type="interactions" value="28"/>
</dbReference>
<dbReference type="STRING" id="284812.A0ZWU1"/>
<dbReference type="iPTMnet" id="A0ZWU1"/>
<dbReference type="PaxDb" id="4896-SPCC1223.10c.1"/>
<dbReference type="EnsemblFungi" id="SPCC1223.10c.1">
    <property type="protein sequence ID" value="SPCC1223.10c.1:pep"/>
    <property type="gene ID" value="SPCC1223.10c"/>
</dbReference>
<dbReference type="PomBase" id="SPCC1223.10c">
    <property type="gene designation" value="eaf1"/>
</dbReference>
<dbReference type="VEuPathDB" id="FungiDB:SPCC1223.10c"/>
<dbReference type="eggNOG" id="ENOG502SEGQ">
    <property type="taxonomic scope" value="Eukaryota"/>
</dbReference>
<dbReference type="HOGENOM" id="CLU_947163_0_0_1"/>
<dbReference type="InParanoid" id="A0ZWU1"/>
<dbReference type="OMA" id="RNVDCVL"/>
<dbReference type="PRO" id="PR:A0ZWU1"/>
<dbReference type="Proteomes" id="UP000002485">
    <property type="component" value="Chromosome III"/>
</dbReference>
<dbReference type="GO" id="GO:0032783">
    <property type="term" value="C:super elongation complex"/>
    <property type="evidence" value="ECO:0000314"/>
    <property type="project" value="PomBase"/>
</dbReference>
<dbReference type="GO" id="GO:0008023">
    <property type="term" value="C:transcription elongation factor complex"/>
    <property type="evidence" value="ECO:0000318"/>
    <property type="project" value="GO_Central"/>
</dbReference>
<dbReference type="GO" id="GO:0003711">
    <property type="term" value="F:transcription elongation factor activity"/>
    <property type="evidence" value="ECO:0000269"/>
    <property type="project" value="PomBase"/>
</dbReference>
<dbReference type="GO" id="GO:0006368">
    <property type="term" value="P:transcription elongation by RNA polymerase II"/>
    <property type="evidence" value="ECO:0000314"/>
    <property type="project" value="PomBase"/>
</dbReference>
<dbReference type="DisProt" id="DP01791"/>
<dbReference type="InterPro" id="IPR027093">
    <property type="entry name" value="EAF_fam"/>
</dbReference>
<dbReference type="InterPro" id="IPR019194">
    <property type="entry name" value="Tscrpt_elong_fac_Eaf_N"/>
</dbReference>
<dbReference type="PANTHER" id="PTHR15970">
    <property type="entry name" value="ELL-ASSOCIATED FACTOR EAF"/>
    <property type="match status" value="1"/>
</dbReference>
<dbReference type="PANTHER" id="PTHR15970:SF2">
    <property type="entry name" value="ELL-ASSOCIATED FACTOR EAF"/>
    <property type="match status" value="1"/>
</dbReference>
<dbReference type="Pfam" id="PF09816">
    <property type="entry name" value="EAF"/>
    <property type="match status" value="1"/>
</dbReference>
<proteinExistence type="evidence at protein level"/>
<name>EAF1_SCHPO</name>
<evidence type="ECO:0000250" key="1">
    <source>
        <dbReference type="UniProtKB" id="Q96JC9"/>
    </source>
</evidence>
<evidence type="ECO:0000255" key="2"/>
<evidence type="ECO:0000256" key="3">
    <source>
        <dbReference type="SAM" id="MobiDB-lite"/>
    </source>
</evidence>
<evidence type="ECO:0000269" key="4">
    <source>
    </source>
</evidence>
<evidence type="ECO:0000269" key="5">
    <source>
    </source>
</evidence>
<evidence type="ECO:0000305" key="6"/>
<evidence type="ECO:0000312" key="7">
    <source>
        <dbReference type="EMBL" id="ABM68355.1"/>
    </source>
</evidence>
<evidence type="ECO:0000312" key="8">
    <source>
        <dbReference type="EMBL" id="CAL92194.1"/>
    </source>
</evidence>